<proteinExistence type="evidence at protein level"/>
<reference key="1">
    <citation type="journal article" date="1988" name="Gene">
        <title>Evolution of the rat immunoglobulin gamma heavy-chain gene family.</title>
        <authorList>
            <person name="Brueggemann M."/>
        </authorList>
    </citation>
    <scope>NUCLEOTIDE SEQUENCE [GENOMIC DNA]</scope>
</reference>
<reference key="2">
    <citation type="journal article" date="1986" name="Proc. Natl. Acad. Sci. U.S.A.">
        <title>Immunoglobulin heavy chain locus of the rat: striking homology to mouse antibody genes.</title>
        <authorList>
            <person name="Bruggemann M."/>
            <person name="Free J."/>
            <person name="Diamond A."/>
            <person name="Howard J."/>
            <person name="Cobbold S."/>
            <person name="Waldmann H."/>
        </authorList>
    </citation>
    <scope>NUCLEOTIDE SEQUENCE [GENOMIC DNA] OF 216-322</scope>
</reference>
<protein>
    <recommendedName>
        <fullName>Ig gamma-2A chain C region</fullName>
    </recommendedName>
</protein>
<feature type="chain" id="PRO_0000153592" description="Ig gamma-2A chain C region">
    <location>
        <begin position="1" status="less than"/>
        <end position="322"/>
    </location>
</feature>
<feature type="domain" description="Ig-like 1">
    <location>
        <begin position="6"/>
        <end position="98"/>
    </location>
</feature>
<feature type="domain" description="Ig-like 2">
    <location>
        <begin position="115"/>
        <end position="212"/>
    </location>
</feature>
<feature type="domain" description="Ig-like 3">
    <location>
        <begin position="221"/>
        <end position="317"/>
    </location>
</feature>
<feature type="glycosylation site" description="N-linked (GlcNAc...) asparagine" evidence="1">
    <location>
        <position position="172"/>
    </location>
</feature>
<feature type="disulfide bond">
    <location>
        <begin position="27"/>
        <end position="82"/>
    </location>
</feature>
<feature type="disulfide bond" description="Interchain (with a heavy chain)">
    <location>
        <position position="102"/>
    </location>
</feature>
<feature type="disulfide bond" description="Interchain (with a heavy chain)">
    <location>
        <position position="105"/>
    </location>
</feature>
<feature type="disulfide bond" description="Interchain (with a heavy chain)">
    <location>
        <position position="107"/>
    </location>
</feature>
<feature type="disulfide bond">
    <location>
        <begin position="136"/>
        <end position="196"/>
    </location>
</feature>
<feature type="disulfide bond">
    <location>
        <begin position="242"/>
        <end position="300"/>
    </location>
</feature>
<feature type="non-terminal residue">
    <location>
        <position position="1"/>
    </location>
</feature>
<feature type="strand" evidence="3">
    <location>
        <begin position="7"/>
        <end position="11"/>
    </location>
</feature>
<feature type="strand" evidence="3">
    <location>
        <begin position="19"/>
        <end position="22"/>
    </location>
</feature>
<feature type="strand" evidence="3">
    <location>
        <begin position="25"/>
        <end position="32"/>
    </location>
</feature>
<feature type="strand" evidence="6">
    <location>
        <begin position="38"/>
        <end position="41"/>
    </location>
</feature>
<feature type="helix" evidence="3">
    <location>
        <begin position="42"/>
        <end position="44"/>
    </location>
</feature>
<feature type="strand" evidence="6">
    <location>
        <begin position="50"/>
        <end position="52"/>
    </location>
</feature>
<feature type="strand" evidence="6">
    <location>
        <begin position="56"/>
        <end position="58"/>
    </location>
</feature>
<feature type="strand" evidence="3">
    <location>
        <begin position="66"/>
        <end position="68"/>
    </location>
</feature>
<feature type="helix" evidence="6">
    <location>
        <begin position="72"/>
        <end position="77"/>
    </location>
</feature>
<feature type="strand" evidence="6">
    <location>
        <begin position="81"/>
        <end position="85"/>
    </location>
</feature>
<feature type="turn" evidence="3">
    <location>
        <begin position="87"/>
        <end position="90"/>
    </location>
</feature>
<feature type="strand" evidence="6">
    <location>
        <begin position="93"/>
        <end position="96"/>
    </location>
</feature>
<feature type="strand" evidence="5">
    <location>
        <begin position="115"/>
        <end position="118"/>
    </location>
</feature>
<feature type="helix" evidence="5">
    <location>
        <begin position="122"/>
        <end position="125"/>
    </location>
</feature>
<feature type="strand" evidence="5">
    <location>
        <begin position="128"/>
        <end position="130"/>
    </location>
</feature>
<feature type="strand" evidence="5">
    <location>
        <begin position="133"/>
        <end position="141"/>
    </location>
</feature>
<feature type="strand" evidence="4">
    <location>
        <begin position="142"/>
        <end position="144"/>
    </location>
</feature>
<feature type="strand" evidence="5">
    <location>
        <begin position="149"/>
        <end position="156"/>
    </location>
</feature>
<feature type="strand" evidence="4">
    <location>
        <begin position="163"/>
        <end position="169"/>
    </location>
</feature>
<feature type="turn" evidence="4">
    <location>
        <begin position="171"/>
        <end position="173"/>
    </location>
</feature>
<feature type="strand" evidence="5">
    <location>
        <begin position="175"/>
        <end position="182"/>
    </location>
</feature>
<feature type="helix" evidence="5">
    <location>
        <begin position="185"/>
        <end position="189"/>
    </location>
</feature>
<feature type="strand" evidence="5">
    <location>
        <begin position="194"/>
        <end position="199"/>
    </location>
</feature>
<feature type="strand" evidence="5">
    <location>
        <begin position="201"/>
        <end position="205"/>
    </location>
</feature>
<feature type="strand" evidence="5">
    <location>
        <begin position="207"/>
        <end position="211"/>
    </location>
</feature>
<feature type="strand" evidence="5">
    <location>
        <begin position="222"/>
        <end position="226"/>
    </location>
</feature>
<feature type="helix" evidence="5">
    <location>
        <begin position="230"/>
        <end position="234"/>
    </location>
</feature>
<feature type="strand" evidence="5">
    <location>
        <begin position="235"/>
        <end position="250"/>
    </location>
</feature>
<feature type="strand" evidence="5">
    <location>
        <begin position="253"/>
        <end position="258"/>
    </location>
</feature>
<feature type="strand" evidence="5">
    <location>
        <begin position="264"/>
        <end position="268"/>
    </location>
</feature>
<feature type="strand" evidence="5">
    <location>
        <begin position="279"/>
        <end position="288"/>
    </location>
</feature>
<feature type="helix" evidence="5">
    <location>
        <begin position="289"/>
        <end position="293"/>
    </location>
</feature>
<feature type="strand" evidence="5">
    <location>
        <begin position="298"/>
        <end position="303"/>
    </location>
</feature>
<feature type="helix" evidence="5">
    <location>
        <begin position="308"/>
        <end position="310"/>
    </location>
</feature>
<feature type="strand" evidence="5">
    <location>
        <begin position="311"/>
        <end position="316"/>
    </location>
</feature>
<keyword id="KW-0002">3D-structure</keyword>
<keyword id="KW-1015">Disulfide bond</keyword>
<keyword id="KW-0325">Glycoprotein</keyword>
<keyword id="KW-0393">Immunoglobulin domain</keyword>
<keyword id="KW-1185">Reference proteome</keyword>
<keyword id="KW-0677">Repeat</keyword>
<accession>P20760</accession>
<evidence type="ECO:0000255" key="1"/>
<evidence type="ECO:0000305" key="2"/>
<evidence type="ECO:0007829" key="3">
    <source>
        <dbReference type="PDB" id="1FN4"/>
    </source>
</evidence>
<evidence type="ECO:0007829" key="4">
    <source>
        <dbReference type="PDB" id="1I1A"/>
    </source>
</evidence>
<evidence type="ECO:0007829" key="5">
    <source>
        <dbReference type="PDB" id="1I1C"/>
    </source>
</evidence>
<evidence type="ECO:0007829" key="6">
    <source>
        <dbReference type="PDB" id="4UAO"/>
    </source>
</evidence>
<name>IGG2A_RAT</name>
<gene>
    <name type="primary">Igg-2a</name>
</gene>
<organism>
    <name type="scientific">Rattus norvegicus</name>
    <name type="common">Rat</name>
    <dbReference type="NCBI Taxonomy" id="10116"/>
    <lineage>
        <taxon>Eukaryota</taxon>
        <taxon>Metazoa</taxon>
        <taxon>Chordata</taxon>
        <taxon>Craniata</taxon>
        <taxon>Vertebrata</taxon>
        <taxon>Euteleostomi</taxon>
        <taxon>Mammalia</taxon>
        <taxon>Eutheria</taxon>
        <taxon>Euarchontoglires</taxon>
        <taxon>Glires</taxon>
        <taxon>Rodentia</taxon>
        <taxon>Myomorpha</taxon>
        <taxon>Muroidea</taxon>
        <taxon>Muridae</taxon>
        <taxon>Murinae</taxon>
        <taxon>Rattus</taxon>
    </lineage>
</organism>
<comment type="sequence caution" evidence="2">
    <conflict type="erroneous initiation">
        <sequence resource="EMBL-CDS" id="AAA41376"/>
    </conflict>
</comment>
<sequence>AETTAPSVYPLAPGTALKSNSMVTLGCLVKGYFPEPVTVTWNSGALSSGVHTFPAVLQSGLYTLTSSVTVPSSTWSSQAVTCNVAHPASSTKVDKKIVPRECNPCGCTGSEVSSVFIFPPKTKDVLTITLTPKVTCVVVDISQNDPEVRFSWFIDDVEVHTAQTHAPEKQSNSTLRSVSELPIVHRDWLNGKTFKCKVNSGAFPAPIEKSISKPEGTPRGPQVYTMAPPKEEMTQSQVSITCMVKGFYPPDIYTEWKMNGQPQENYKNTPPTMDTDGSYFLYSKLNVKKETWQQGNTFTCSVLHEGLHNHHTEKSLSHSPGK</sequence>
<dbReference type="EMBL" id="M13804">
    <property type="protein sequence ID" value="AAA41376.1"/>
    <property type="status" value="ALT_INIT"/>
    <property type="molecule type" value="Genomic_DNA"/>
</dbReference>
<dbReference type="PIR" id="PS0019">
    <property type="entry name" value="PS0019"/>
</dbReference>
<dbReference type="PDB" id="1FN4">
    <property type="method" value="X-ray"/>
    <property type="resolution" value="2.80 A"/>
    <property type="chains" value="B/D=4-102"/>
</dbReference>
<dbReference type="PDB" id="1I1A">
    <property type="method" value="X-ray"/>
    <property type="resolution" value="2.80 A"/>
    <property type="chains" value="C/D=98-322"/>
</dbReference>
<dbReference type="PDB" id="1I1C">
    <property type="method" value="X-ray"/>
    <property type="resolution" value="2.70 A"/>
    <property type="chains" value="A/B=98-322"/>
</dbReference>
<dbReference type="PDB" id="4UAO">
    <property type="method" value="X-ray"/>
    <property type="resolution" value="3.10 A"/>
    <property type="chains" value="C=1-102"/>
</dbReference>
<dbReference type="PDBsum" id="1FN4"/>
<dbReference type="PDBsum" id="1I1A"/>
<dbReference type="PDBsum" id="1I1C"/>
<dbReference type="PDBsum" id="4UAO"/>
<dbReference type="SMR" id="P20760"/>
<dbReference type="FunCoup" id="P20760">
    <property type="interactions" value="134"/>
</dbReference>
<dbReference type="IntAct" id="P20760">
    <property type="interactions" value="2"/>
</dbReference>
<dbReference type="CarbonylDB" id="P20760"/>
<dbReference type="GlyCosmos" id="P20760">
    <property type="glycosylation" value="1 site, No reported glycans"/>
</dbReference>
<dbReference type="GlyGen" id="P20760">
    <property type="glycosylation" value="2 sites, 1 O-linked glycan (1 site)"/>
</dbReference>
<dbReference type="PaxDb" id="10116-ENSRNOP00000062949"/>
<dbReference type="AGR" id="RGD:1359626"/>
<dbReference type="RGD" id="1359626">
    <property type="gene designation" value="Igg-2a"/>
</dbReference>
<dbReference type="eggNOG" id="ENOG502R54U">
    <property type="taxonomic scope" value="Eukaryota"/>
</dbReference>
<dbReference type="InParanoid" id="P20760"/>
<dbReference type="PhylomeDB" id="P20760"/>
<dbReference type="EvolutionaryTrace" id="P20760"/>
<dbReference type="PRO" id="PR:P20760"/>
<dbReference type="Proteomes" id="UP000002494">
    <property type="component" value="Unplaced"/>
</dbReference>
<dbReference type="GO" id="GO:0042571">
    <property type="term" value="C:immunoglobulin complex, circulating"/>
    <property type="evidence" value="ECO:0000318"/>
    <property type="project" value="GO_Central"/>
</dbReference>
<dbReference type="GO" id="GO:0003823">
    <property type="term" value="F:antigen binding"/>
    <property type="evidence" value="ECO:0000318"/>
    <property type="project" value="GO_Central"/>
</dbReference>
<dbReference type="GO" id="GO:0034987">
    <property type="term" value="F:immunoglobulin receptor binding"/>
    <property type="evidence" value="ECO:0000318"/>
    <property type="project" value="GO_Central"/>
</dbReference>
<dbReference type="GO" id="GO:0019731">
    <property type="term" value="P:antibacterial humoral response"/>
    <property type="evidence" value="ECO:0000318"/>
    <property type="project" value="GO_Central"/>
</dbReference>
<dbReference type="GO" id="GO:0006958">
    <property type="term" value="P:complement activation, classical pathway"/>
    <property type="evidence" value="ECO:0000318"/>
    <property type="project" value="GO_Central"/>
</dbReference>
<dbReference type="CDD" id="cd21817">
    <property type="entry name" value="IgC1_CH1_IgEG"/>
    <property type="match status" value="1"/>
</dbReference>
<dbReference type="CDD" id="cd05768">
    <property type="entry name" value="IgC1_CH3_IgAGD_CH4_IgAEM"/>
    <property type="match status" value="1"/>
</dbReference>
<dbReference type="FunFam" id="2.60.40.10:FF:001739">
    <property type="entry name" value="Ig gamma-2A chain C region"/>
    <property type="match status" value="1"/>
</dbReference>
<dbReference type="FunFam" id="2.60.40.10:FF:000463">
    <property type="entry name" value="Immunoglobulin heavy constant gamma 1"/>
    <property type="match status" value="1"/>
</dbReference>
<dbReference type="FunFam" id="2.60.40.10:FF:001129">
    <property type="entry name" value="Immunoglobulin heavy constant gamma 1"/>
    <property type="match status" value="1"/>
</dbReference>
<dbReference type="Gene3D" id="2.60.40.10">
    <property type="entry name" value="Immunoglobulins"/>
    <property type="match status" value="3"/>
</dbReference>
<dbReference type="InterPro" id="IPR007110">
    <property type="entry name" value="Ig-like_dom"/>
</dbReference>
<dbReference type="InterPro" id="IPR036179">
    <property type="entry name" value="Ig-like_dom_sf"/>
</dbReference>
<dbReference type="InterPro" id="IPR013783">
    <property type="entry name" value="Ig-like_fold"/>
</dbReference>
<dbReference type="InterPro" id="IPR003597">
    <property type="entry name" value="Ig_C1-set"/>
</dbReference>
<dbReference type="InterPro" id="IPR050380">
    <property type="entry name" value="Immune_Resp_Modulators"/>
</dbReference>
<dbReference type="PANTHER" id="PTHR23411">
    <property type="entry name" value="TAPASIN"/>
    <property type="match status" value="1"/>
</dbReference>
<dbReference type="Pfam" id="PF07654">
    <property type="entry name" value="C1-set"/>
    <property type="match status" value="3"/>
</dbReference>
<dbReference type="SMART" id="SM00407">
    <property type="entry name" value="IGc1"/>
    <property type="match status" value="2"/>
</dbReference>
<dbReference type="SUPFAM" id="SSF48726">
    <property type="entry name" value="Immunoglobulin"/>
    <property type="match status" value="3"/>
</dbReference>
<dbReference type="PROSITE" id="PS50835">
    <property type="entry name" value="IG_LIKE"/>
    <property type="match status" value="3"/>
</dbReference>